<keyword id="KW-0002">3D-structure</keyword>
<keyword id="KW-0007">Acetylation</keyword>
<keyword id="KW-0030">Aminoacyl-tRNA synthetase</keyword>
<keyword id="KW-0067">ATP-binding</keyword>
<keyword id="KW-0225">Disease variant</keyword>
<keyword id="KW-0890">Hereditary spastic paraplegia</keyword>
<keyword id="KW-0436">Ligase</keyword>
<keyword id="KW-0496">Mitochondrion</keyword>
<keyword id="KW-0523">Neurodegeneration</keyword>
<keyword id="KW-0547">Nucleotide-binding</keyword>
<keyword id="KW-1274">Primary mitochondrial disease</keyword>
<keyword id="KW-0648">Protein biosynthesis</keyword>
<keyword id="KW-1267">Proteomics identification</keyword>
<keyword id="KW-1185">Reference proteome</keyword>
<keyword id="KW-0809">Transit peptide</keyword>
<feature type="transit peptide" description="Mitochondrion" evidence="2">
    <location>
        <begin position="1"/>
        <end status="unknown"/>
    </location>
</feature>
<feature type="chain" id="PRO_0000035813" description="Phenylalanine--tRNA ligase, mitochondrial">
    <location>
        <begin status="unknown"/>
        <end position="451"/>
    </location>
</feature>
<feature type="domain" description="FDX-ACB" evidence="3">
    <location>
        <begin position="358"/>
        <end position="450"/>
    </location>
</feature>
<feature type="binding site">
    <location>
        <begin position="157"/>
        <end position="160"/>
    </location>
    <ligand>
        <name>substrate</name>
    </ligand>
</feature>
<feature type="binding site" evidence="6 7">
    <location>
        <position position="179"/>
    </location>
    <ligand>
        <name>substrate</name>
    </ligand>
</feature>
<feature type="binding site">
    <location>
        <begin position="186"/>
        <end position="188"/>
    </location>
    <ligand>
        <name>substrate</name>
    </ligand>
</feature>
<feature type="binding site">
    <location>
        <begin position="193"/>
        <end position="195"/>
    </location>
    <ligand>
        <name>substrate</name>
    </ligand>
</feature>
<feature type="binding site" evidence="6 7">
    <location>
        <position position="287"/>
    </location>
    <ligand>
        <name>substrate</name>
    </ligand>
</feature>
<feature type="binding site" evidence="6 7">
    <location>
        <position position="312"/>
    </location>
    <ligand>
        <name>substrate</name>
    </ligand>
</feature>
<feature type="modified residue" description="N6-acetyllysine" evidence="14">
    <location>
        <position position="202"/>
    </location>
</feature>
<feature type="sequence variant" id="VAR_052642" description="In dbSNP:rs34382405.">
    <original>S</original>
    <variation>C</variation>
    <location>
        <position position="57"/>
    </location>
</feature>
<feature type="sequence variant" id="VAR_077044" description="In SPG77; resulted in severely impaired phenylalanine-tRNA ligase activity; dbSNP:rs145555213." evidence="10">
    <original>D</original>
    <variation>Y</variation>
    <location>
        <position position="142"/>
    </location>
</feature>
<feature type="sequence variant" id="VAR_069487" description="In COXPD14; results in decreased affinity for tRNA causing a decrease in the catalytic efficiency for tRNA charging; does not affect ATP or Phe binding; dbSNP:rs397514610." evidence="8 9">
    <original>Y</original>
    <variation>C</variation>
    <location>
        <position position="144"/>
    </location>
</feature>
<feature type="sequence variant" id="VAR_052643" description="In dbSNP:rs11243011." evidence="5 11 12">
    <original>N</original>
    <variation>S</variation>
    <location>
        <position position="280"/>
    </location>
</feature>
<feature type="sequence variant" id="VAR_069488" description="In COXPD14; results in a 4-fold decrease in the catalytic efficiency of amino acid activation mainly due to a decreased affinity for ATP; does not affect Phe binding; affects the stability of the enzyme, leading to a significant decrease in overall charging capacity; dbSNP:rs397514611." evidence="9">
    <original>I</original>
    <variation>T</variation>
    <location>
        <position position="329"/>
    </location>
</feature>
<feature type="sequence variant" id="VAR_069489" description="In COXPD14; results in a decrease in affinity for Phe causing a decrease in aminoacylation activity; affects the stability of the enzyme, leading to a significant decrease in overall charging capacity; dbSNP:rs397514612." evidence="9">
    <original>D</original>
    <variation>V</variation>
    <location>
        <position position="391"/>
    </location>
</feature>
<feature type="sequence conflict" description="In Ref. 4; BAD97143." evidence="13" ref="4">
    <original>A</original>
    <variation>T</variation>
    <location>
        <position position="158"/>
    </location>
</feature>
<feature type="sequence conflict" description="In Ref. 7; AAF28998." evidence="13" ref="7">
    <original>P</original>
    <variation>T</variation>
    <location>
        <position position="361"/>
    </location>
</feature>
<feature type="strand" evidence="18">
    <location>
        <begin position="49"/>
        <end position="53"/>
    </location>
</feature>
<feature type="strand" evidence="18">
    <location>
        <begin position="56"/>
        <end position="59"/>
    </location>
</feature>
<feature type="helix" evidence="18">
    <location>
        <begin position="68"/>
        <end position="71"/>
    </location>
</feature>
<feature type="turn" evidence="18">
    <location>
        <begin position="72"/>
        <end position="75"/>
    </location>
</feature>
<feature type="helix" evidence="18">
    <location>
        <begin position="78"/>
        <end position="80"/>
    </location>
</feature>
<feature type="strand" evidence="16">
    <location>
        <begin position="81"/>
        <end position="84"/>
    </location>
</feature>
<feature type="helix" evidence="18">
    <location>
        <begin position="85"/>
        <end position="99"/>
    </location>
</feature>
<feature type="strand" evidence="17">
    <location>
        <begin position="104"/>
        <end position="106"/>
    </location>
</feature>
<feature type="strand" evidence="18">
    <location>
        <begin position="111"/>
        <end position="113"/>
    </location>
</feature>
<feature type="strand" evidence="18">
    <location>
        <begin position="118"/>
        <end position="121"/>
    </location>
</feature>
<feature type="helix" evidence="18">
    <location>
        <begin position="122"/>
        <end position="125"/>
    </location>
</feature>
<feature type="helix" evidence="18">
    <location>
        <begin position="127"/>
        <end position="129"/>
    </location>
</feature>
<feature type="helix" evidence="18">
    <location>
        <begin position="136"/>
        <end position="138"/>
    </location>
</feature>
<feature type="turn" evidence="18">
    <location>
        <begin position="140"/>
        <end position="142"/>
    </location>
</feature>
<feature type="strand" evidence="18">
    <location>
        <begin position="145"/>
        <end position="152"/>
    </location>
</feature>
<feature type="helix" evidence="18">
    <location>
        <begin position="156"/>
        <end position="159"/>
    </location>
</feature>
<feature type="helix" evidence="18">
    <location>
        <begin position="160"/>
        <end position="165"/>
    </location>
</feature>
<feature type="strand" evidence="18">
    <location>
        <begin position="169"/>
        <end position="178"/>
    </location>
</feature>
<feature type="strand" evidence="16">
    <location>
        <begin position="184"/>
        <end position="186"/>
    </location>
</feature>
<feature type="strand" evidence="18">
    <location>
        <begin position="189"/>
        <end position="200"/>
    </location>
</feature>
<feature type="helix" evidence="18">
    <location>
        <begin position="202"/>
        <end position="205"/>
    </location>
</feature>
<feature type="turn" evidence="18">
    <location>
        <begin position="206"/>
        <end position="208"/>
    </location>
</feature>
<feature type="helix" evidence="17">
    <location>
        <begin position="212"/>
        <end position="214"/>
    </location>
</feature>
<feature type="helix" evidence="18">
    <location>
        <begin position="233"/>
        <end position="255"/>
    </location>
</feature>
<feature type="helix" evidence="15">
    <location>
        <begin position="256"/>
        <end position="258"/>
    </location>
</feature>
<feature type="strand" evidence="18">
    <location>
        <begin position="261"/>
        <end position="268"/>
    </location>
</feature>
<feature type="strand" evidence="18">
    <location>
        <begin position="271"/>
        <end position="281"/>
    </location>
</feature>
<feature type="strand" evidence="18">
    <location>
        <begin position="284"/>
        <end position="294"/>
    </location>
</feature>
<feature type="helix" evidence="18">
    <location>
        <begin position="296"/>
        <end position="301"/>
    </location>
</feature>
<feature type="strand" evidence="18">
    <location>
        <begin position="308"/>
        <end position="315"/>
    </location>
</feature>
<feature type="helix" evidence="18">
    <location>
        <begin position="316"/>
        <end position="324"/>
    </location>
</feature>
<feature type="helix" evidence="18">
    <location>
        <begin position="329"/>
        <end position="333"/>
    </location>
</feature>
<feature type="helix" evidence="18">
    <location>
        <begin position="337"/>
        <end position="340"/>
    </location>
</feature>
<feature type="helix" evidence="18">
    <location>
        <begin position="341"/>
        <end position="343"/>
    </location>
</feature>
<feature type="strand" evidence="18">
    <location>
        <begin position="363"/>
        <end position="370"/>
    </location>
</feature>
<feature type="helix" evidence="18">
    <location>
        <begin position="378"/>
        <end position="389"/>
    </location>
</feature>
<feature type="helix" evidence="18">
    <location>
        <begin position="390"/>
        <end position="392"/>
    </location>
</feature>
<feature type="strand" evidence="18">
    <location>
        <begin position="393"/>
        <end position="403"/>
    </location>
</feature>
<feature type="turn" evidence="18">
    <location>
        <begin position="405"/>
        <end position="407"/>
    </location>
</feature>
<feature type="strand" evidence="18">
    <location>
        <begin position="410"/>
        <end position="418"/>
    </location>
</feature>
<feature type="strand" evidence="18">
    <location>
        <begin position="421"/>
        <end position="423"/>
    </location>
</feature>
<feature type="helix" evidence="18">
    <location>
        <begin position="427"/>
        <end position="445"/>
    </location>
</feature>
<feature type="strand" evidence="15">
    <location>
        <begin position="448"/>
        <end position="451"/>
    </location>
</feature>
<comment type="function">
    <text evidence="7 9">Is responsible for the charging of tRNA(Phe) with phenylalanine in mitochondrial translation. To a lesser extent, also catalyzes direct attachment of m-Tyr (an oxidized version of Phe) to tRNA(Phe), thereby opening the way for delivery of the misacylated tRNA to the ribosome and incorporation of ROS-damaged amino acid into proteins.</text>
</comment>
<comment type="catalytic activity">
    <reaction evidence="7 9">
        <text>tRNA(Phe) + L-phenylalanine + ATP = L-phenylalanyl-tRNA(Phe) + AMP + diphosphate + H(+)</text>
        <dbReference type="Rhea" id="RHEA:19413"/>
        <dbReference type="Rhea" id="RHEA-COMP:9668"/>
        <dbReference type="Rhea" id="RHEA-COMP:9699"/>
        <dbReference type="ChEBI" id="CHEBI:15378"/>
        <dbReference type="ChEBI" id="CHEBI:30616"/>
        <dbReference type="ChEBI" id="CHEBI:33019"/>
        <dbReference type="ChEBI" id="CHEBI:58095"/>
        <dbReference type="ChEBI" id="CHEBI:78442"/>
        <dbReference type="ChEBI" id="CHEBI:78531"/>
        <dbReference type="ChEBI" id="CHEBI:456215"/>
        <dbReference type="EC" id="6.1.1.20"/>
    </reaction>
</comment>
<comment type="biophysicochemical properties">
    <kinetics>
        <KM evidence="7 9">2.2 uM for L-phenylalanine</KM>
        <KM evidence="7 9">1900 uM for L-tyrosine</KM>
        <KM evidence="7 9">11.7 uM for DL-m-tyrosine</KM>
        <KM evidence="7 9">7.3 uM for L-phenylalanine</KM>
        <KM evidence="7 9">2.9 mM for ATP</KM>
        <KM evidence="7 9">1.2 uM for tRNA(Phe)</KM>
        <text evidence="7">kcat is 2.8 min(-1), 2.0 min(-1) and 3.1 min(-1) with L-phenylalanine, L-tyrosine and m-tyrosine as substrate, respectively. Thus, the catalytic efficiency of the m-Tyr attachment is only 5-fold lower than that of the correct amino acid, while that of Tyr attachment is 1000-fold lower (PubMed:19549855).</text>
    </kinetics>
</comment>
<comment type="subunit">
    <text evidence="4 6 7">Monomer.</text>
</comment>
<comment type="interaction">
    <interactant intactId="EBI-2513774">
        <id>O95363</id>
    </interactant>
    <interactant intactId="EBI-10173507">
        <id>Q6UY14-3</id>
        <label>ADAMTSL4</label>
    </interactant>
    <organismsDiffer>false</organismsDiffer>
    <experiments>3</experiments>
</comment>
<comment type="interaction">
    <interactant intactId="EBI-2513774">
        <id>O95363</id>
    </interactant>
    <interactant intactId="EBI-741181">
        <id>Q6RW13</id>
        <label>AGTRAP</label>
    </interactant>
    <organismsDiffer>false</organismsDiffer>
    <experiments>3</experiments>
</comment>
<comment type="interaction">
    <interactant intactId="EBI-2513774">
        <id>O95363</id>
    </interactant>
    <interactant intactId="EBI-11522760">
        <id>Q6RW13-2</id>
        <label>AGTRAP</label>
    </interactant>
    <organismsDiffer>false</organismsDiffer>
    <experiments>3</experiments>
</comment>
<comment type="interaction">
    <interactant intactId="EBI-2513774">
        <id>O95363</id>
    </interactant>
    <interactant intactId="EBI-949782">
        <id>Q96IF1</id>
        <label>AJUBA</label>
    </interactant>
    <organismsDiffer>false</organismsDiffer>
    <experiments>3</experiments>
</comment>
<comment type="interaction">
    <interactant intactId="EBI-2513774">
        <id>O95363</id>
    </interactant>
    <interactant intactId="EBI-11978055">
        <id>Q10567-3</id>
        <label>AP1B1</label>
    </interactant>
    <organismsDiffer>false</organismsDiffer>
    <experiments>3</experiments>
</comment>
<comment type="interaction">
    <interactant intactId="EBI-2513774">
        <id>O95363</id>
    </interactant>
    <interactant intactId="EBI-741243">
        <id>Q9UKG1</id>
        <label>APPL1</label>
    </interactant>
    <organismsDiffer>false</organismsDiffer>
    <experiments>9</experiments>
</comment>
<comment type="interaction">
    <interactant intactId="EBI-2513774">
        <id>O95363</id>
    </interactant>
    <interactant intactId="EBI-1642333">
        <id>Q9BYV9</id>
        <label>BACH2</label>
    </interactant>
    <organismsDiffer>false</organismsDiffer>
    <experiments>3</experiments>
</comment>
<comment type="interaction">
    <interactant intactId="EBI-2513774">
        <id>O95363</id>
    </interactant>
    <interactant intactId="EBI-2949658">
        <id>O95429</id>
        <label>BAG4</label>
    </interactant>
    <organismsDiffer>false</organismsDiffer>
    <experiments>3</experiments>
</comment>
<comment type="interaction">
    <interactant intactId="EBI-2513774">
        <id>O95363</id>
    </interactant>
    <interactant intactId="EBI-11524452">
        <id>Q8N9N5-2</id>
        <label>BANP</label>
    </interactant>
    <organismsDiffer>false</organismsDiffer>
    <experiments>4</experiments>
</comment>
<comment type="interaction">
    <interactant intactId="EBI-2513774">
        <id>O95363</id>
    </interactant>
    <interactant intactId="EBI-10243741">
        <id>Q5H9J7</id>
        <label>BEX5</label>
    </interactant>
    <organismsDiffer>false</organismsDiffer>
    <experiments>3</experiments>
</comment>
<comment type="interaction">
    <interactant intactId="EBI-2513774">
        <id>O95363</id>
    </interactant>
    <interactant intactId="EBI-739580">
        <id>Q13137</id>
        <label>CALCOCO2</label>
    </interactant>
    <organismsDiffer>false</organismsDiffer>
    <experiments>7</experiments>
</comment>
<comment type="interaction">
    <interactant intactId="EBI-2513774">
        <id>O95363</id>
    </interactant>
    <interactant intactId="EBI-11524851">
        <id>Q8NA61-2</id>
        <label>CBY2</label>
    </interactant>
    <organismsDiffer>false</organismsDiffer>
    <experiments>3</experiments>
</comment>
<comment type="interaction">
    <interactant intactId="EBI-2513774">
        <id>O95363</id>
    </interactant>
    <interactant intactId="EBI-18398007">
        <id>Q4G0S7</id>
        <label>CCDC152</label>
    </interactant>
    <organismsDiffer>false</organismsDiffer>
    <experiments>3</experiments>
</comment>
<comment type="interaction">
    <interactant intactId="EBI-2513774">
        <id>O95363</id>
    </interactant>
    <interactant intactId="EBI-1773949">
        <id>Q9BXL8</id>
        <label>CDCA4</label>
    </interactant>
    <organismsDiffer>false</organismsDiffer>
    <experiments>3</experiments>
</comment>
<comment type="interaction">
    <interactant intactId="EBI-2513774">
        <id>O95363</id>
    </interactant>
    <interactant intactId="EBI-2548702">
        <id>Q96DZ9</id>
        <label>CMTM5</label>
    </interactant>
    <organismsDiffer>false</organismsDiffer>
    <experiments>3</experiments>
</comment>
<comment type="interaction">
    <interactant intactId="EBI-2513774">
        <id>O95363</id>
    </interactant>
    <interactant intactId="EBI-11522780">
        <id>Q96DZ9-2</id>
        <label>CMTM5</label>
    </interactant>
    <organismsDiffer>false</organismsDiffer>
    <experiments>3</experiments>
</comment>
<comment type="interaction">
    <interactant intactId="EBI-2513774">
        <id>O95363</id>
    </interactant>
    <interactant intactId="EBI-3867333">
        <id>A8MQ03</id>
        <label>CYSRT1</label>
    </interactant>
    <organismsDiffer>false</organismsDiffer>
    <experiments>3</experiments>
</comment>
<comment type="interaction">
    <interactant intactId="EBI-2513774">
        <id>O95363</id>
    </interactant>
    <interactant intactId="EBI-12831978">
        <id>Q6ZPD8</id>
        <label>DGAT2L6</label>
    </interactant>
    <organismsDiffer>false</organismsDiffer>
    <experiments>3</experiments>
</comment>
<comment type="interaction">
    <interactant intactId="EBI-2513774">
        <id>O95363</id>
    </interactant>
    <interactant intactId="EBI-10237931">
        <id>Q9BQC3</id>
        <label>DPH2</label>
    </interactant>
    <organismsDiffer>false</organismsDiffer>
    <experiments>3</experiments>
</comment>
<comment type="interaction">
    <interactant intactId="EBI-2513774">
        <id>O95363</id>
    </interactant>
    <interactant intactId="EBI-739789">
        <id>Q92997</id>
        <label>DVL3</label>
    </interactant>
    <organismsDiffer>false</organismsDiffer>
    <experiments>3</experiments>
</comment>
<comment type="interaction">
    <interactant intactId="EBI-2513774">
        <id>O95363</id>
    </interactant>
    <interactant intactId="EBI-750641">
        <id>Q5TD97</id>
        <label>FHL5</label>
    </interactant>
    <organismsDiffer>false</organismsDiffer>
    <experiments>3</experiments>
</comment>
<comment type="interaction">
    <interactant intactId="EBI-2513774">
        <id>O95363</id>
    </interactant>
    <interactant intactId="EBI-3918971">
        <id>Q9Y680</id>
        <label>FKBP7</label>
    </interactant>
    <organismsDiffer>false</organismsDiffer>
    <experiments>3</experiments>
</comment>
<comment type="interaction">
    <interactant intactId="EBI-2513774">
        <id>O95363</id>
    </interactant>
    <interactant intactId="EBI-5661036">
        <id>A1L4K1</id>
        <label>FSD2</label>
    </interactant>
    <organismsDiffer>false</organismsDiffer>
    <experiments>3</experiments>
</comment>
<comment type="interaction">
    <interactant intactId="EBI-2513774">
        <id>O95363</id>
    </interactant>
    <interactant intactId="EBI-3909086">
        <id>Q14353</id>
        <label>GAMT</label>
    </interactant>
    <organismsDiffer>false</organismsDiffer>
    <experiments>2</experiments>
</comment>
<comment type="interaction">
    <interactant intactId="EBI-2513774">
        <id>O95363</id>
    </interactant>
    <interactant intactId="EBI-12353035">
        <id>Q13322-4</id>
        <label>GRB10</label>
    </interactant>
    <organismsDiffer>false</organismsDiffer>
    <experiments>3</experiments>
</comment>
<comment type="interaction">
    <interactant intactId="EBI-2513774">
        <id>O95363</id>
    </interactant>
    <interactant intactId="EBI-12809676">
        <id>A8MV81</id>
        <label>HIGD1C</label>
    </interactant>
    <organismsDiffer>false</organismsDiffer>
    <experiments>3</experiments>
</comment>
<comment type="interaction">
    <interactant intactId="EBI-2513774">
        <id>O95363</id>
    </interactant>
    <interactant intactId="EBI-2549423">
        <id>Q6NT76</id>
        <label>HMBOX1</label>
    </interactant>
    <organismsDiffer>false</organismsDiffer>
    <experiments>3</experiments>
</comment>
<comment type="interaction">
    <interactant intactId="EBI-2513774">
        <id>O95363</id>
    </interactant>
    <interactant intactId="EBI-747204">
        <id>Q9UKT9</id>
        <label>IKZF3</label>
    </interactant>
    <organismsDiffer>false</organismsDiffer>
    <experiments>6</experiments>
</comment>
<comment type="interaction">
    <interactant intactId="EBI-2513774">
        <id>O95363</id>
    </interactant>
    <interactant intactId="EBI-18398632">
        <id>Q9ULR0-1</id>
        <label>ISY1</label>
    </interactant>
    <organismsDiffer>false</organismsDiffer>
    <experiments>3</experiments>
</comment>
<comment type="interaction">
    <interactant intactId="EBI-2513774">
        <id>O95363</id>
    </interactant>
    <interactant intactId="EBI-6918743">
        <id>Q9H3M0</id>
        <label>KCNF1</label>
    </interactant>
    <organismsDiffer>false</organismsDiffer>
    <experiments>3</experiments>
</comment>
<comment type="interaction">
    <interactant intactId="EBI-2513774">
        <id>O95363</id>
    </interactant>
    <interactant intactId="EBI-743960">
        <id>Q8N5Z5</id>
        <label>KCTD17</label>
    </interactant>
    <organismsDiffer>false</organismsDiffer>
    <experiments>3</experiments>
</comment>
<comment type="interaction">
    <interactant intactId="EBI-2513774">
        <id>O95363</id>
    </interactant>
    <interactant intactId="EBI-10171552">
        <id>A1A4E9</id>
        <label>KRT13</label>
    </interactant>
    <organismsDiffer>false</organismsDiffer>
    <experiments>3</experiments>
</comment>
<comment type="interaction">
    <interactant intactId="EBI-2513774">
        <id>O95363</id>
    </interactant>
    <interactant intactId="EBI-948001">
        <id>Q15323</id>
        <label>KRT31</label>
    </interactant>
    <organismsDiffer>false</organismsDiffer>
    <experiments>3</experiments>
</comment>
<comment type="interaction">
    <interactant intactId="EBI-2513774">
        <id>O95363</id>
    </interactant>
    <interactant intactId="EBI-1047093">
        <id>O76011</id>
        <label>KRT34</label>
    </interactant>
    <organismsDiffer>false</organismsDiffer>
    <experiments>3</experiments>
</comment>
<comment type="interaction">
    <interactant intactId="EBI-2513774">
        <id>O95363</id>
    </interactant>
    <interactant intactId="EBI-10171697">
        <id>Q6A162</id>
        <label>KRT40</label>
    </interactant>
    <organismsDiffer>false</organismsDiffer>
    <experiments>6</experiments>
</comment>
<comment type="interaction">
    <interactant intactId="EBI-2513774">
        <id>O95363</id>
    </interactant>
    <interactant intactId="EBI-11959885">
        <id>Q07627</id>
        <label>KRTAP1-1</label>
    </interactant>
    <organismsDiffer>false</organismsDiffer>
    <experiments>3</experiments>
</comment>
<comment type="interaction">
    <interactant intactId="EBI-2513774">
        <id>O95363</id>
    </interactant>
    <interactant intactId="EBI-10172150">
        <id>P60370</id>
        <label>KRTAP10-5</label>
    </interactant>
    <organismsDiffer>false</organismsDiffer>
    <experiments>3</experiments>
</comment>
<comment type="interaction">
    <interactant intactId="EBI-2513774">
        <id>O95363</id>
    </interactant>
    <interactant intactId="EBI-10172290">
        <id>P60409</id>
        <label>KRTAP10-7</label>
    </interactant>
    <organismsDiffer>false</organismsDiffer>
    <experiments>6</experiments>
</comment>
<comment type="interaction">
    <interactant intactId="EBI-2513774">
        <id>O95363</id>
    </interactant>
    <interactant intactId="EBI-10171774">
        <id>P60410</id>
        <label>KRTAP10-8</label>
    </interactant>
    <organismsDiffer>false</organismsDiffer>
    <experiments>3</experiments>
</comment>
<comment type="interaction">
    <interactant intactId="EBI-2513774">
        <id>O95363</id>
    </interactant>
    <interactant intactId="EBI-10172052">
        <id>P60411</id>
        <label>KRTAP10-9</label>
    </interactant>
    <organismsDiffer>false</organismsDiffer>
    <experiments>6</experiments>
</comment>
<comment type="interaction">
    <interactant intactId="EBI-2513774">
        <id>O95363</id>
    </interactant>
    <interactant intactId="EBI-3957694">
        <id>Q9BYR6</id>
        <label>KRTAP3-3</label>
    </interactant>
    <organismsDiffer>false</organismsDiffer>
    <experiments>3</experiments>
</comment>
<comment type="interaction">
    <interactant intactId="EBI-2513774">
        <id>O95363</id>
    </interactant>
    <interactant intactId="EBI-7260764">
        <id>Q9NR34</id>
        <label>MAN1C1</label>
    </interactant>
    <organismsDiffer>false</organismsDiffer>
    <experiments>3</experiments>
</comment>
<comment type="interaction">
    <interactant intactId="EBI-2513774">
        <id>O95363</id>
    </interactant>
    <interactant intactId="EBI-724076">
        <id>Q99750</id>
        <label>MDFI</label>
    </interactant>
    <organismsDiffer>false</organismsDiffer>
    <experiments>3</experiments>
</comment>
<comment type="interaction">
    <interactant intactId="EBI-2513774">
        <id>O95363</id>
    </interactant>
    <interactant intactId="EBI-6165891">
        <id>Q14696</id>
        <label>MESD</label>
    </interactant>
    <organismsDiffer>false</organismsDiffer>
    <experiments>3</experiments>
</comment>
<comment type="interaction">
    <interactant intactId="EBI-2513774">
        <id>O95363</id>
    </interactant>
    <interactant intactId="EBI-10172526">
        <id>Q9UJV3-2</id>
        <label>MID2</label>
    </interactant>
    <organismsDiffer>false</organismsDiffer>
    <experiments>6</experiments>
</comment>
<comment type="interaction">
    <interactant intactId="EBI-2513774">
        <id>O95363</id>
    </interactant>
    <interactant intactId="EBI-2340269">
        <id>Q13064</id>
        <label>MKRN3</label>
    </interactant>
    <organismsDiffer>false</organismsDiffer>
    <experiments>3</experiments>
</comment>
<comment type="interaction">
    <interactant intactId="EBI-2513774">
        <id>O95363</id>
    </interactant>
    <interactant intactId="EBI-9675802">
        <id>Q6PF18</id>
        <label>MORN3</label>
    </interactant>
    <organismsDiffer>false</organismsDiffer>
    <experiments>3</experiments>
</comment>
<comment type="interaction">
    <interactant intactId="EBI-2513774">
        <id>O95363</id>
    </interactant>
    <interactant intactId="EBI-10271199">
        <id>Q8NI38</id>
        <label>NFKBID</label>
    </interactant>
    <organismsDiffer>false</organismsDiffer>
    <experiments>3</experiments>
</comment>
<comment type="interaction">
    <interactant intactId="EBI-2513774">
        <id>O95363</id>
    </interactant>
    <interactant intactId="EBI-945833">
        <id>Q7Z3S9</id>
        <label>NOTCH2NLA</label>
    </interactant>
    <organismsDiffer>false</organismsDiffer>
    <experiments>3</experiments>
</comment>
<comment type="interaction">
    <interactant intactId="EBI-2513774">
        <id>O95363</id>
    </interactant>
    <interactant intactId="EBI-11956269">
        <id>Q92824-2</id>
        <label>PCSK5</label>
    </interactant>
    <organismsDiffer>false</organismsDiffer>
    <experiments>3</experiments>
</comment>
<comment type="interaction">
    <interactant intactId="EBI-2513774">
        <id>O95363</id>
    </interactant>
    <interactant intactId="EBI-10293968">
        <id>Q96T49</id>
        <label>PPP1R16B</label>
    </interactant>
    <organismsDiffer>false</organismsDiffer>
    <experiments>3</experiments>
</comment>
<comment type="interaction">
    <interactant intactId="EBI-2513774">
        <id>O95363</id>
    </interactant>
    <interactant intactId="EBI-742404">
        <id>O95199</id>
        <label>RCBTB2</label>
    </interactant>
    <organismsDiffer>false</organismsDiffer>
    <experiments>6</experiments>
</comment>
<comment type="interaction">
    <interactant intactId="EBI-2513774">
        <id>O95363</id>
    </interactant>
    <interactant intactId="EBI-10182375">
        <id>Q9UFD9</id>
        <label>RIMBP3</label>
    </interactant>
    <organismsDiffer>false</organismsDiffer>
    <experiments>3</experiments>
</comment>
<comment type="interaction">
    <interactant intactId="EBI-2513774">
        <id>O95363</id>
    </interactant>
    <interactant intactId="EBI-3866665">
        <id>O43609</id>
        <label>SPRY1</label>
    </interactant>
    <organismsDiffer>false</organismsDiffer>
    <experiments>3</experiments>
</comment>
<comment type="interaction">
    <interactant intactId="EBI-2513774">
        <id>O95363</id>
    </interactant>
    <interactant intactId="EBI-714135">
        <id>O75558</id>
        <label>STX11</label>
    </interactant>
    <organismsDiffer>false</organismsDiffer>
    <experiments>3</experiments>
</comment>
<comment type="interaction">
    <interactant intactId="EBI-2513774">
        <id>O95363</id>
    </interactant>
    <interactant intactId="EBI-9071725">
        <id>P08247</id>
        <label>SYP</label>
    </interactant>
    <organismsDiffer>false</organismsDiffer>
    <experiments>3</experiments>
</comment>
<comment type="interaction">
    <interactant intactId="EBI-2513774">
        <id>O95363</id>
    </interactant>
    <interactant intactId="EBI-742268">
        <id>O75478</id>
        <label>TADA2A</label>
    </interactant>
    <organismsDiffer>false</organismsDiffer>
    <experiments>3</experiments>
</comment>
<comment type="interaction">
    <interactant intactId="EBI-2513774">
        <id>O95363</id>
    </interactant>
    <interactant intactId="EBI-11139477">
        <id>Q96N21</id>
        <label>TEPSIN</label>
    </interactant>
    <organismsDiffer>false</organismsDiffer>
    <experiments>3</experiments>
</comment>
<comment type="interaction">
    <interactant intactId="EBI-2513774">
        <id>O95363</id>
    </interactant>
    <interactant intactId="EBI-717422">
        <id>Q12800</id>
        <label>TFCP2</label>
    </interactant>
    <organismsDiffer>false</organismsDiffer>
    <experiments>3</experiments>
</comment>
<comment type="interaction">
    <interactant intactId="EBI-2513774">
        <id>O95363</id>
    </interactant>
    <interactant intactId="EBI-10977815">
        <id>P07951-2</id>
        <label>TPM2</label>
    </interactant>
    <organismsDiffer>false</organismsDiffer>
    <experiments>3</experiments>
</comment>
<comment type="interaction">
    <interactant intactId="EBI-2513774">
        <id>O95363</id>
    </interactant>
    <interactant intactId="EBI-355744">
        <id>Q12933</id>
        <label>TRAF2</label>
    </interactant>
    <organismsDiffer>false</organismsDiffer>
    <experiments>3</experiments>
</comment>
<comment type="interaction">
    <interactant intactId="EBI-2513774">
        <id>O95363</id>
    </interactant>
    <interactant intactId="EBI-719493">
        <id>P14373</id>
        <label>TRIM27</label>
    </interactant>
    <organismsDiffer>false</organismsDiffer>
    <experiments>3</experiments>
</comment>
<comment type="interaction">
    <interactant intactId="EBI-2513774">
        <id>O95363</id>
    </interactant>
    <interactant intactId="EBI-2130429">
        <id>Q9BYV2</id>
        <label>TRIM54</label>
    </interactant>
    <organismsDiffer>false</organismsDiffer>
    <experiments>3</experiments>
</comment>
<comment type="interaction">
    <interactant intactId="EBI-2513774">
        <id>O95363</id>
    </interactant>
    <interactant intactId="EBI-742327">
        <id>Q15654</id>
        <label>TRIP6</label>
    </interactant>
    <organismsDiffer>false</organismsDiffer>
    <experiments>3</experiments>
</comment>
<comment type="interaction">
    <interactant intactId="EBI-2513774">
        <id>O95363</id>
    </interactant>
    <interactant intactId="EBI-2799703">
        <id>O95070</id>
        <label>YIF1A</label>
    </interactant>
    <organismsDiffer>false</organismsDiffer>
    <experiments>3</experiments>
</comment>
<comment type="interaction">
    <interactant intactId="EBI-2513774">
        <id>O95363</id>
    </interactant>
    <interactant intactId="EBI-11962468">
        <id>Q7Z4V0</id>
        <label>ZNF438</label>
    </interactant>
    <organismsDiffer>false</organismsDiffer>
    <experiments>3</experiments>
</comment>
<comment type="interaction">
    <interactant intactId="EBI-2513774">
        <id>O95363</id>
    </interactant>
    <interactant intactId="EBI-18234077">
        <id>O60304</id>
        <label>ZNF500</label>
    </interactant>
    <organismsDiffer>false</organismsDiffer>
    <experiments>3</experiments>
</comment>
<comment type="interaction">
    <interactant intactId="EBI-2513774">
        <id>O95363</id>
    </interactant>
    <interactant intactId="EBI-11035148">
        <id>Q8TF50</id>
        <label>ZNF526</label>
    </interactant>
    <organismsDiffer>false</organismsDiffer>
    <experiments>3</experiments>
</comment>
<comment type="interaction">
    <interactant intactId="EBI-2513774">
        <id>O95363</id>
    </interactant>
    <interactant intactId="EBI-625509">
        <id>Q8N720</id>
        <label>ZNF655</label>
    </interactant>
    <organismsDiffer>false</organismsDiffer>
    <experiments>3</experiments>
</comment>
<comment type="interaction">
    <interactant intactId="EBI-2513774">
        <id>O95363</id>
    </interactant>
    <interactant intactId="EBI-527853">
        <id>Q9UGI0</id>
        <label>ZRANB1</label>
    </interactant>
    <organismsDiffer>false</organismsDiffer>
    <experiments>3</experiments>
</comment>
<comment type="subcellular location">
    <subcellularLocation>
        <location evidence="1">Mitochondrion matrix</location>
    </subcellularLocation>
    <subcellularLocation>
        <location evidence="1">Mitochondrion</location>
    </subcellularLocation>
</comment>
<comment type="disease" evidence="8 9">
    <disease id="DI-03630">
        <name>Combined oxidative phosphorylation deficiency 14</name>
        <acronym>COXPD14</acronym>
        <description>A severe multisystemic autosomal recessive disorder characterized by neonatal onset of global developmental delay, refractory seizures, and lactic acidosis. Biochemical studies show deficiencies of multiple mitochondrial respiratory enzymes.</description>
        <dbReference type="MIM" id="614946"/>
    </disease>
    <text>The disease is caused by variants affecting the gene represented in this entry.</text>
</comment>
<comment type="disease" evidence="10">
    <disease id="DI-04770">
        <name>Spastic paraplegia 77, autosomal recessive</name>
        <acronym>SPG77</acronym>
        <description>A form of spastic paraplegia, a neurodegenerative disorder characterized by a slow, gradual, progressive weakness and spasticity of the lower limbs. Rate of progression and the severity of symptoms are quite variable. Initial symptoms may include difficulty with balance, weakness and stiffness in the legs, muscle spasms, and dragging the toes when walking. In some forms of the disorder, bladder symptoms (such as incontinence) may appear, or the weakness and stiffness may spread to other parts of the body.</description>
        <dbReference type="MIM" id="617046"/>
    </disease>
    <text>The disease is caused by variants affecting the gene represented in this entry.</text>
</comment>
<comment type="similarity">
    <text evidence="13">Belongs to the class-II aminoacyl-tRNA synthetase family.</text>
</comment>
<comment type="sequence caution" evidence="13">
    <conflict type="frameshift">
        <sequence resource="EMBL-CDS" id="AAF28998"/>
    </conflict>
</comment>
<proteinExistence type="evidence at protein level"/>
<name>SYFM_HUMAN</name>
<accession>O95363</accession>
<accession>B2R664</accession>
<accession>Q53F66</accession>
<accession>Q5TCS3</accession>
<accession>Q6FG29</accession>
<accession>Q9NPY7</accession>
<accession>Q9P062</accession>
<reference key="1">
    <citation type="journal article" date="1999" name="J. Mol. Biol.">
        <title>Expression and characterization of a human mitochondrial phenylalanyl-tRNA synthetase.</title>
        <authorList>
            <person name="Bullard J.M."/>
            <person name="Cai Y.-C."/>
            <person name="Demeler B."/>
            <person name="Spremulli L.L."/>
        </authorList>
    </citation>
    <scope>NUCLEOTIDE SEQUENCE [MRNA]</scope>
    <scope>SUBUNIT</scope>
</reference>
<reference key="2">
    <citation type="journal article" date="2004" name="Nat. Genet.">
        <title>Complete sequencing and characterization of 21,243 full-length human cDNAs.</title>
        <authorList>
            <person name="Ota T."/>
            <person name="Suzuki Y."/>
            <person name="Nishikawa T."/>
            <person name="Otsuki T."/>
            <person name="Sugiyama T."/>
            <person name="Irie R."/>
            <person name="Wakamatsu A."/>
            <person name="Hayashi K."/>
            <person name="Sato H."/>
            <person name="Nagai K."/>
            <person name="Kimura K."/>
            <person name="Makita H."/>
            <person name="Sekine M."/>
            <person name="Obayashi M."/>
            <person name="Nishi T."/>
            <person name="Shibahara T."/>
            <person name="Tanaka T."/>
            <person name="Ishii S."/>
            <person name="Yamamoto J."/>
            <person name="Saito K."/>
            <person name="Kawai Y."/>
            <person name="Isono Y."/>
            <person name="Nakamura Y."/>
            <person name="Nagahari K."/>
            <person name="Murakami K."/>
            <person name="Yasuda T."/>
            <person name="Iwayanagi T."/>
            <person name="Wagatsuma M."/>
            <person name="Shiratori A."/>
            <person name="Sudo H."/>
            <person name="Hosoiri T."/>
            <person name="Kaku Y."/>
            <person name="Kodaira H."/>
            <person name="Kondo H."/>
            <person name="Sugawara M."/>
            <person name="Takahashi M."/>
            <person name="Kanda K."/>
            <person name="Yokoi T."/>
            <person name="Furuya T."/>
            <person name="Kikkawa E."/>
            <person name="Omura Y."/>
            <person name="Abe K."/>
            <person name="Kamihara K."/>
            <person name="Katsuta N."/>
            <person name="Sato K."/>
            <person name="Tanikawa M."/>
            <person name="Yamazaki M."/>
            <person name="Ninomiya K."/>
            <person name="Ishibashi T."/>
            <person name="Yamashita H."/>
            <person name="Murakawa K."/>
            <person name="Fujimori K."/>
            <person name="Tanai H."/>
            <person name="Kimata M."/>
            <person name="Watanabe M."/>
            <person name="Hiraoka S."/>
            <person name="Chiba Y."/>
            <person name="Ishida S."/>
            <person name="Ono Y."/>
            <person name="Takiguchi S."/>
            <person name="Watanabe S."/>
            <person name="Yosida M."/>
            <person name="Hotuta T."/>
            <person name="Kusano J."/>
            <person name="Kanehori K."/>
            <person name="Takahashi-Fujii A."/>
            <person name="Hara H."/>
            <person name="Tanase T.-O."/>
            <person name="Nomura Y."/>
            <person name="Togiya S."/>
            <person name="Komai F."/>
            <person name="Hara R."/>
            <person name="Takeuchi K."/>
            <person name="Arita M."/>
            <person name="Imose N."/>
            <person name="Musashino K."/>
            <person name="Yuuki H."/>
            <person name="Oshima A."/>
            <person name="Sasaki N."/>
            <person name="Aotsuka S."/>
            <person name="Yoshikawa Y."/>
            <person name="Matsunawa H."/>
            <person name="Ichihara T."/>
            <person name="Shiohata N."/>
            <person name="Sano S."/>
            <person name="Moriya S."/>
            <person name="Momiyama H."/>
            <person name="Satoh N."/>
            <person name="Takami S."/>
            <person name="Terashima Y."/>
            <person name="Suzuki O."/>
            <person name="Nakagawa S."/>
            <person name="Senoh A."/>
            <person name="Mizoguchi H."/>
            <person name="Goto Y."/>
            <person name="Shimizu F."/>
            <person name="Wakebe H."/>
            <person name="Hishigaki H."/>
            <person name="Watanabe T."/>
            <person name="Sugiyama A."/>
            <person name="Takemoto M."/>
            <person name="Kawakami B."/>
            <person name="Yamazaki M."/>
            <person name="Watanabe K."/>
            <person name="Kumagai A."/>
            <person name="Itakura S."/>
            <person name="Fukuzumi Y."/>
            <person name="Fujimori Y."/>
            <person name="Komiyama M."/>
            <person name="Tashiro H."/>
            <person name="Tanigami A."/>
            <person name="Fujiwara T."/>
            <person name="Ono T."/>
            <person name="Yamada K."/>
            <person name="Fujii Y."/>
            <person name="Ozaki K."/>
            <person name="Hirao M."/>
            <person name="Ohmori Y."/>
            <person name="Kawabata A."/>
            <person name="Hikiji T."/>
            <person name="Kobatake N."/>
            <person name="Inagaki H."/>
            <person name="Ikema Y."/>
            <person name="Okamoto S."/>
            <person name="Okitani R."/>
            <person name="Kawakami T."/>
            <person name="Noguchi S."/>
            <person name="Itoh T."/>
            <person name="Shigeta K."/>
            <person name="Senba T."/>
            <person name="Matsumura K."/>
            <person name="Nakajima Y."/>
            <person name="Mizuno T."/>
            <person name="Morinaga M."/>
            <person name="Sasaki M."/>
            <person name="Togashi T."/>
            <person name="Oyama M."/>
            <person name="Hata H."/>
            <person name="Watanabe M."/>
            <person name="Komatsu T."/>
            <person name="Mizushima-Sugano J."/>
            <person name="Satoh T."/>
            <person name="Shirai Y."/>
            <person name="Takahashi Y."/>
            <person name="Nakagawa K."/>
            <person name="Okumura K."/>
            <person name="Nagase T."/>
            <person name="Nomura N."/>
            <person name="Kikuchi H."/>
            <person name="Masuho Y."/>
            <person name="Yamashita R."/>
            <person name="Nakai K."/>
            <person name="Yada T."/>
            <person name="Nakamura Y."/>
            <person name="Ohara O."/>
            <person name="Isogai T."/>
            <person name="Sugano S."/>
        </authorList>
    </citation>
    <scope>NUCLEOTIDE SEQUENCE [LARGE SCALE MRNA]</scope>
    <scope>VARIANT SER-280</scope>
    <source>
        <tissue>Caudate nucleus</tissue>
    </source>
</reference>
<reference key="3">
    <citation type="submission" date="2004-06" db="EMBL/GenBank/DDBJ databases">
        <title>Cloning of human full open reading frames in Gateway(TM) system entry vector (pDONR201).</title>
        <authorList>
            <person name="Halleck A."/>
            <person name="Ebert L."/>
            <person name="Mkoundinya M."/>
            <person name="Schick M."/>
            <person name="Eisenstein S."/>
            <person name="Neubert P."/>
            <person name="Kstrang K."/>
            <person name="Schatten R."/>
            <person name="Shen B."/>
            <person name="Henze S."/>
            <person name="Mar W."/>
            <person name="Korn B."/>
            <person name="Zuo D."/>
            <person name="Hu Y."/>
            <person name="LaBaer J."/>
        </authorList>
    </citation>
    <scope>NUCLEOTIDE SEQUENCE [LARGE SCALE MRNA]</scope>
    <scope>VARIANT SER-280</scope>
</reference>
<reference key="4">
    <citation type="submission" date="2005-04" db="EMBL/GenBank/DDBJ databases">
        <authorList>
            <person name="Totoki Y."/>
            <person name="Toyoda A."/>
            <person name="Takeda T."/>
            <person name="Sakaki Y."/>
            <person name="Tanaka A."/>
            <person name="Yokoyama S."/>
        </authorList>
    </citation>
    <scope>NUCLEOTIDE SEQUENCE [LARGE SCALE MRNA]</scope>
    <source>
        <tissue>Kidney epithelium</tissue>
    </source>
</reference>
<reference key="5">
    <citation type="journal article" date="2003" name="Nature">
        <title>The DNA sequence and analysis of human chromosome 6.</title>
        <authorList>
            <person name="Mungall A.J."/>
            <person name="Palmer S.A."/>
            <person name="Sims S.K."/>
            <person name="Edwards C.A."/>
            <person name="Ashurst J.L."/>
            <person name="Wilming L."/>
            <person name="Jones M.C."/>
            <person name="Horton R."/>
            <person name="Hunt S.E."/>
            <person name="Scott C.E."/>
            <person name="Gilbert J.G.R."/>
            <person name="Clamp M.E."/>
            <person name="Bethel G."/>
            <person name="Milne S."/>
            <person name="Ainscough R."/>
            <person name="Almeida J.P."/>
            <person name="Ambrose K.D."/>
            <person name="Andrews T.D."/>
            <person name="Ashwell R.I.S."/>
            <person name="Babbage A.K."/>
            <person name="Bagguley C.L."/>
            <person name="Bailey J."/>
            <person name="Banerjee R."/>
            <person name="Barker D.J."/>
            <person name="Barlow K.F."/>
            <person name="Bates K."/>
            <person name="Beare D.M."/>
            <person name="Beasley H."/>
            <person name="Beasley O."/>
            <person name="Bird C.P."/>
            <person name="Blakey S.E."/>
            <person name="Bray-Allen S."/>
            <person name="Brook J."/>
            <person name="Brown A.J."/>
            <person name="Brown J.Y."/>
            <person name="Burford D.C."/>
            <person name="Burrill W."/>
            <person name="Burton J."/>
            <person name="Carder C."/>
            <person name="Carter N.P."/>
            <person name="Chapman J.C."/>
            <person name="Clark S.Y."/>
            <person name="Clark G."/>
            <person name="Clee C.M."/>
            <person name="Clegg S."/>
            <person name="Cobley V."/>
            <person name="Collier R.E."/>
            <person name="Collins J.E."/>
            <person name="Colman L.K."/>
            <person name="Corby N.R."/>
            <person name="Coville G.J."/>
            <person name="Culley K.M."/>
            <person name="Dhami P."/>
            <person name="Davies J."/>
            <person name="Dunn M."/>
            <person name="Earthrowl M.E."/>
            <person name="Ellington A.E."/>
            <person name="Evans K.A."/>
            <person name="Faulkner L."/>
            <person name="Francis M.D."/>
            <person name="Frankish A."/>
            <person name="Frankland J."/>
            <person name="French L."/>
            <person name="Garner P."/>
            <person name="Garnett J."/>
            <person name="Ghori M.J."/>
            <person name="Gilby L.M."/>
            <person name="Gillson C.J."/>
            <person name="Glithero R.J."/>
            <person name="Grafham D.V."/>
            <person name="Grant M."/>
            <person name="Gribble S."/>
            <person name="Griffiths C."/>
            <person name="Griffiths M.N.D."/>
            <person name="Hall R."/>
            <person name="Halls K.S."/>
            <person name="Hammond S."/>
            <person name="Harley J.L."/>
            <person name="Hart E.A."/>
            <person name="Heath P.D."/>
            <person name="Heathcott R."/>
            <person name="Holmes S.J."/>
            <person name="Howden P.J."/>
            <person name="Howe K.L."/>
            <person name="Howell G.R."/>
            <person name="Huckle E."/>
            <person name="Humphray S.J."/>
            <person name="Humphries M.D."/>
            <person name="Hunt A.R."/>
            <person name="Johnson C.M."/>
            <person name="Joy A.A."/>
            <person name="Kay M."/>
            <person name="Keenan S.J."/>
            <person name="Kimberley A.M."/>
            <person name="King A."/>
            <person name="Laird G.K."/>
            <person name="Langford C."/>
            <person name="Lawlor S."/>
            <person name="Leongamornlert D.A."/>
            <person name="Leversha M."/>
            <person name="Lloyd C.R."/>
            <person name="Lloyd D.M."/>
            <person name="Loveland J.E."/>
            <person name="Lovell J."/>
            <person name="Martin S."/>
            <person name="Mashreghi-Mohammadi M."/>
            <person name="Maslen G.L."/>
            <person name="Matthews L."/>
            <person name="McCann O.T."/>
            <person name="McLaren S.J."/>
            <person name="McLay K."/>
            <person name="McMurray A."/>
            <person name="Moore M.J.F."/>
            <person name="Mullikin J.C."/>
            <person name="Niblett D."/>
            <person name="Nickerson T."/>
            <person name="Novik K.L."/>
            <person name="Oliver K."/>
            <person name="Overton-Larty E.K."/>
            <person name="Parker A."/>
            <person name="Patel R."/>
            <person name="Pearce A.V."/>
            <person name="Peck A.I."/>
            <person name="Phillimore B.J.C.T."/>
            <person name="Phillips S."/>
            <person name="Plumb R.W."/>
            <person name="Porter K.M."/>
            <person name="Ramsey Y."/>
            <person name="Ranby S.A."/>
            <person name="Rice C.M."/>
            <person name="Ross M.T."/>
            <person name="Searle S.M."/>
            <person name="Sehra H.K."/>
            <person name="Sheridan E."/>
            <person name="Skuce C.D."/>
            <person name="Smith S."/>
            <person name="Smith M."/>
            <person name="Spraggon L."/>
            <person name="Squares S.L."/>
            <person name="Steward C.A."/>
            <person name="Sycamore N."/>
            <person name="Tamlyn-Hall G."/>
            <person name="Tester J."/>
            <person name="Theaker A.J."/>
            <person name="Thomas D.W."/>
            <person name="Thorpe A."/>
            <person name="Tracey A."/>
            <person name="Tromans A."/>
            <person name="Tubby B."/>
            <person name="Wall M."/>
            <person name="Wallis J.M."/>
            <person name="West A.P."/>
            <person name="White S.S."/>
            <person name="Whitehead S.L."/>
            <person name="Whittaker H."/>
            <person name="Wild A."/>
            <person name="Willey D.J."/>
            <person name="Wilmer T.E."/>
            <person name="Wood J.M."/>
            <person name="Wray P.W."/>
            <person name="Wyatt J.C."/>
            <person name="Young L."/>
            <person name="Younger R.M."/>
            <person name="Bentley D.R."/>
            <person name="Coulson A."/>
            <person name="Durbin R.M."/>
            <person name="Hubbard T."/>
            <person name="Sulston J.E."/>
            <person name="Dunham I."/>
            <person name="Rogers J."/>
            <person name="Beck S."/>
        </authorList>
    </citation>
    <scope>NUCLEOTIDE SEQUENCE [LARGE SCALE GENOMIC DNA]</scope>
</reference>
<reference key="6">
    <citation type="journal article" date="2004" name="Genome Res.">
        <title>The status, quality, and expansion of the NIH full-length cDNA project: the Mammalian Gene Collection (MGC).</title>
        <authorList>
            <consortium name="The MGC Project Team"/>
        </authorList>
    </citation>
    <scope>NUCLEOTIDE SEQUENCE [LARGE SCALE MRNA]</scope>
    <source>
        <tissue>Pancreas</tissue>
    </source>
</reference>
<reference key="7">
    <citation type="submission" date="1999-05" db="EMBL/GenBank/DDBJ databases">
        <title>Human partial CDS from CD34+ stem cells.</title>
        <authorList>
            <person name="Ye M."/>
            <person name="Zhang Q.-H."/>
            <person name="Zhou J."/>
            <person name="Shen Y."/>
            <person name="Wu X.-Y."/>
            <person name="Guan Z.Q."/>
            <person name="Wang L."/>
            <person name="Fan H.-Y."/>
            <person name="Mao Y.-F."/>
            <person name="Dai M."/>
            <person name="Huang Q.-H."/>
            <person name="Chen S.-J."/>
            <person name="Chen Z."/>
        </authorList>
    </citation>
    <scope>NUCLEOTIDE SEQUENCE [LARGE SCALE MRNA] OF 108-451</scope>
    <scope>VARIANT SER-280</scope>
    <source>
        <tissue>Umbilical cord blood</tissue>
    </source>
</reference>
<reference key="8">
    <citation type="journal article" date="2009" name="Science">
        <title>Lysine acetylation targets protein complexes and co-regulates major cellular functions.</title>
        <authorList>
            <person name="Choudhary C."/>
            <person name="Kumar C."/>
            <person name="Gnad F."/>
            <person name="Nielsen M.L."/>
            <person name="Rehman M."/>
            <person name="Walther T.C."/>
            <person name="Olsen J.V."/>
            <person name="Mann M."/>
        </authorList>
    </citation>
    <scope>ACETYLATION [LARGE SCALE ANALYSIS] AT LYS-202</scope>
    <scope>IDENTIFICATION BY MASS SPECTROMETRY [LARGE SCALE ANALYSIS]</scope>
</reference>
<reference key="9">
    <citation type="journal article" date="2015" name="Proteomics">
        <title>N-terminome analysis of the human mitochondrial proteome.</title>
        <authorList>
            <person name="Vaca Jacome A.S."/>
            <person name="Rabilloud T."/>
            <person name="Schaeffer-Reiss C."/>
            <person name="Rompais M."/>
            <person name="Ayoub D."/>
            <person name="Lane L."/>
            <person name="Bairoch A."/>
            <person name="Van Dorsselaer A."/>
            <person name="Carapito C."/>
        </authorList>
    </citation>
    <scope>IDENTIFICATION BY MASS SPECTROMETRY [LARGE SCALE ANALYSIS]</scope>
</reference>
<reference key="10">
    <citation type="journal article" date="2008" name="Structure">
        <title>The tRNA-induced conformational activation of human mitochondrial phenylalanyl-tRNA synthetase.</title>
        <authorList>
            <person name="Klipcan L."/>
            <person name="Levin I."/>
            <person name="Kessler N."/>
            <person name="Moor N."/>
            <person name="Finarov I."/>
            <person name="Safro M."/>
        </authorList>
    </citation>
    <scope>X-RAY CRYSTALLOGRAPHY (2.20 ANGSTROMS) OF 38-451 IN COMPLEX WITH SUBSTRATE</scope>
    <scope>SUBUNIT</scope>
</reference>
<reference key="11">
    <citation type="journal article" date="2009" name="Proc. Natl. Acad. Sci. U.S.A.">
        <title>Eukaryotic cytosolic and mitochondrial phenylalanyl-tRNA synthetases catalyze the charging of tRNA with the meta-tyrosine.</title>
        <authorList>
            <person name="Klipcan L."/>
            <person name="Moor N."/>
            <person name="Kessler N."/>
            <person name="Safro M.G."/>
        </authorList>
    </citation>
    <scope>X-RAY CRYSTALLOGRAPHY (2.60 ANGSTROMS) OF 38-451 IN COMPLEX WITH SUBSTRATE</scope>
    <scope>FUNCTION</scope>
    <scope>CATALYTIC ACTIVITY</scope>
    <scope>SUBSTRATE SPECIFICITY</scope>
    <scope>KINETIC PARAMETERS</scope>
</reference>
<reference key="12">
    <citation type="journal article" date="2012" name="Hum. Mol. Genet.">
        <title>Mitochondrial phenylalanyl-tRNA synthetase mutations underlie fatal infantile Alpers encephalopathy.</title>
        <authorList>
            <person name="Elo J.M."/>
            <person name="Yadavalli S.S."/>
            <person name="Euro L."/>
            <person name="Isohanni P."/>
            <person name="Gotz A."/>
            <person name="Carroll C.J."/>
            <person name="Valanne L."/>
            <person name="Alkuraya F.S."/>
            <person name="Uusimaa J."/>
            <person name="Paetau A."/>
            <person name="Caruso E.M."/>
            <person name="Pihko H."/>
            <person name="Ibba M."/>
            <person name="Tyynismaa H."/>
            <person name="Suomalainen A."/>
        </authorList>
    </citation>
    <scope>VARIANTS COXPD14 THR-329 AND VAL-391</scope>
    <scope>CHARACTERIZATION OF VARIANTS COXPD14 CYS-144; THR-329 AND VAL-391</scope>
    <scope>FUNCTION</scope>
    <scope>CATALYTIC ACTIVITY</scope>
    <scope>KINETIC PARAMETERS</scope>
</reference>
<reference key="13">
    <citation type="journal article" date="2012" name="J. Med. Genet.">
        <title>Genomic analysis of mitochondrial diseases in a consanguineous population reveals novel candidate disease genes.</title>
        <authorList>
            <person name="Shamseldin H.E."/>
            <person name="Alshammari M."/>
            <person name="Al-Sheddi T."/>
            <person name="Salih M.A."/>
            <person name="Alkhalidi H."/>
            <person name="Kentab A."/>
            <person name="Repetto G.M."/>
            <person name="Hashem M."/>
            <person name="Alkuraya F.S."/>
        </authorList>
    </citation>
    <scope>VARIANT COXPD14 CYS-144</scope>
</reference>
<reference key="14">
    <citation type="journal article" date="2016" name="Hum. Mutat.">
        <title>A newly identified missense mutation in FARS2 causes autosomal-recessive spastic paraplegia.</title>
        <authorList>
            <person name="Yang Y."/>
            <person name="Liu W."/>
            <person name="Fang Z."/>
            <person name="Shi J."/>
            <person name="Che F."/>
            <person name="He C."/>
            <person name="Yao L."/>
            <person name="Wang E."/>
            <person name="Wu Y."/>
        </authorList>
    </citation>
    <scope>VARIANT SPG77 TYR-142</scope>
    <scope>CHARACTERIZATION OF VARIANT SPG77 TYR-142</scope>
</reference>
<evidence type="ECO:0000250" key="1">
    <source>
        <dbReference type="UniProtKB" id="Q6AYQ3"/>
    </source>
</evidence>
<evidence type="ECO:0000255" key="2"/>
<evidence type="ECO:0000255" key="3">
    <source>
        <dbReference type="PROSITE-ProRule" id="PRU00778"/>
    </source>
</evidence>
<evidence type="ECO:0000269" key="4">
    <source>
    </source>
</evidence>
<evidence type="ECO:0000269" key="5">
    <source>
    </source>
</evidence>
<evidence type="ECO:0000269" key="6">
    <source>
    </source>
</evidence>
<evidence type="ECO:0000269" key="7">
    <source>
    </source>
</evidence>
<evidence type="ECO:0000269" key="8">
    <source>
    </source>
</evidence>
<evidence type="ECO:0000269" key="9">
    <source>
    </source>
</evidence>
<evidence type="ECO:0000269" key="10">
    <source>
    </source>
</evidence>
<evidence type="ECO:0000269" key="11">
    <source ref="3"/>
</evidence>
<evidence type="ECO:0000269" key="12">
    <source ref="7"/>
</evidence>
<evidence type="ECO:0000305" key="13"/>
<evidence type="ECO:0007744" key="14">
    <source>
    </source>
</evidence>
<evidence type="ECO:0007829" key="15">
    <source>
        <dbReference type="PDB" id="3HFV"/>
    </source>
</evidence>
<evidence type="ECO:0007829" key="16">
    <source>
        <dbReference type="PDB" id="3TUP"/>
    </source>
</evidence>
<evidence type="ECO:0007829" key="17">
    <source>
        <dbReference type="PDB" id="5MGH"/>
    </source>
</evidence>
<evidence type="ECO:0007829" key="18">
    <source>
        <dbReference type="PDB" id="5MGW"/>
    </source>
</evidence>
<protein>
    <recommendedName>
        <fullName>Phenylalanine--tRNA ligase, mitochondrial</fullName>
        <ecNumber evidence="7 9">6.1.1.20</ecNumber>
    </recommendedName>
    <alternativeName>
        <fullName>Phenylalanyl-tRNA synthetase</fullName>
        <shortName>PheRS</shortName>
    </alternativeName>
</protein>
<sequence length="451" mass="52357">MVGSALRRGAHAYVYLVSKASHISRGHQHQAWGSRPPAAECATQRAPGSVVELLGKSYPQDDHSNLTRKVLTRVGRNLHNQQHHPLWLIKERVKEHFYKQYVGRFGTPLFSVYDNLSPVVTTWQNFDSLLIPADHPSRKKGDNYYLNRTHMLRAHTSAHQWDLLHAGLDAFLVVGDVYRRDQIDSQHYPIFHQLEAVRLFSKHELFAGIKDGESLQLFEQSSRSAHKQETHTMEAVKLVEFDLKQTLTRLMAHLFGDELEIRWVDCYFPFTHPSFEMEINFHGEWLEVLGCGVMEQQLVNSAGAQDRIGWAFGLGLERLAMILYDIPDIRLFWCEDERFLKQFCVSNINQKVKFQPLSKYPAVINDISFWLPSENYAENDFYDLVRTIGGDLVEKVDLIDKFVHPKTHKTSHCYRITYRHMERTLSQREVRHIHQALQEAAVQLLGVEGRF</sequence>
<gene>
    <name type="primary">FARS2</name>
    <name type="synonym">FARS1</name>
    <name type="ORF">HSPC320</name>
</gene>
<organism>
    <name type="scientific">Homo sapiens</name>
    <name type="common">Human</name>
    <dbReference type="NCBI Taxonomy" id="9606"/>
    <lineage>
        <taxon>Eukaryota</taxon>
        <taxon>Metazoa</taxon>
        <taxon>Chordata</taxon>
        <taxon>Craniata</taxon>
        <taxon>Vertebrata</taxon>
        <taxon>Euteleostomi</taxon>
        <taxon>Mammalia</taxon>
        <taxon>Eutheria</taxon>
        <taxon>Euarchontoglires</taxon>
        <taxon>Primates</taxon>
        <taxon>Haplorrhini</taxon>
        <taxon>Catarrhini</taxon>
        <taxon>Hominidae</taxon>
        <taxon>Homo</taxon>
    </lineage>
</organism>
<dbReference type="EC" id="6.1.1.20" evidence="7 9"/>
<dbReference type="EMBL" id="AF097441">
    <property type="protein sequence ID" value="AAC83802.1"/>
    <property type="molecule type" value="mRNA"/>
</dbReference>
<dbReference type="EMBL" id="AK312454">
    <property type="protein sequence ID" value="BAG35361.1"/>
    <property type="molecule type" value="mRNA"/>
</dbReference>
<dbReference type="EMBL" id="CR542279">
    <property type="protein sequence ID" value="CAG47075.1"/>
    <property type="molecule type" value="mRNA"/>
</dbReference>
<dbReference type="EMBL" id="AK223423">
    <property type="protein sequence ID" value="BAD97143.1"/>
    <property type="molecule type" value="mRNA"/>
</dbReference>
<dbReference type="EMBL" id="AL133473">
    <property type="status" value="NOT_ANNOTATED_CDS"/>
    <property type="molecule type" value="Genomic_DNA"/>
</dbReference>
<dbReference type="EMBL" id="AL022097">
    <property type="status" value="NOT_ANNOTATED_CDS"/>
    <property type="molecule type" value="Genomic_DNA"/>
</dbReference>
<dbReference type="EMBL" id="AL392184">
    <property type="status" value="NOT_ANNOTATED_CDS"/>
    <property type="molecule type" value="Genomic_DNA"/>
</dbReference>
<dbReference type="EMBL" id="AL121978">
    <property type="status" value="NOT_ANNOTATED_CDS"/>
    <property type="molecule type" value="Genomic_DNA"/>
</dbReference>
<dbReference type="EMBL" id="AL590868">
    <property type="status" value="NOT_ANNOTATED_CDS"/>
    <property type="molecule type" value="Genomic_DNA"/>
</dbReference>
<dbReference type="EMBL" id="BC020239">
    <property type="protein sequence ID" value="AAH20239.1"/>
    <property type="molecule type" value="mRNA"/>
</dbReference>
<dbReference type="EMBL" id="BC021112">
    <property type="protein sequence ID" value="AAH21112.1"/>
    <property type="molecule type" value="mRNA"/>
</dbReference>
<dbReference type="EMBL" id="AF161438">
    <property type="protein sequence ID" value="AAF28998.1"/>
    <property type="status" value="ALT_FRAME"/>
    <property type="molecule type" value="mRNA"/>
</dbReference>
<dbReference type="CCDS" id="CCDS4494.1"/>
<dbReference type="RefSeq" id="NP_001305801.1">
    <property type="nucleotide sequence ID" value="NM_001318872.2"/>
</dbReference>
<dbReference type="RefSeq" id="NP_001361804.1">
    <property type="nucleotide sequence ID" value="NM_001374875.1"/>
</dbReference>
<dbReference type="RefSeq" id="NP_001361805.1">
    <property type="nucleotide sequence ID" value="NM_001374876.1"/>
</dbReference>
<dbReference type="RefSeq" id="NP_001361806.1">
    <property type="nucleotide sequence ID" value="NM_001374877.1"/>
</dbReference>
<dbReference type="RefSeq" id="NP_001361807.1">
    <property type="nucleotide sequence ID" value="NM_001374878.1"/>
</dbReference>
<dbReference type="RefSeq" id="NP_001361808.1">
    <property type="nucleotide sequence ID" value="NM_001374879.1"/>
</dbReference>
<dbReference type="RefSeq" id="NP_001362186.1">
    <property type="nucleotide sequence ID" value="NM_001375257.1"/>
</dbReference>
<dbReference type="RefSeq" id="NP_006558.1">
    <property type="nucleotide sequence ID" value="NM_006567.5"/>
</dbReference>
<dbReference type="RefSeq" id="XP_005248869.1">
    <property type="nucleotide sequence ID" value="XM_005248812.3"/>
</dbReference>
<dbReference type="RefSeq" id="XP_016865675.1">
    <property type="nucleotide sequence ID" value="XM_017010186.1"/>
</dbReference>
<dbReference type="RefSeq" id="XP_016865676.1">
    <property type="nucleotide sequence ID" value="XM_017010187.1"/>
</dbReference>
<dbReference type="RefSeq" id="XP_047274042.1">
    <property type="nucleotide sequence ID" value="XM_047418086.1"/>
</dbReference>
<dbReference type="RefSeq" id="XP_054210022.1">
    <property type="nucleotide sequence ID" value="XM_054354047.1"/>
</dbReference>
<dbReference type="PDB" id="3CMQ">
    <property type="method" value="X-ray"/>
    <property type="resolution" value="2.20 A"/>
    <property type="chains" value="A=38-451"/>
</dbReference>
<dbReference type="PDB" id="3HFV">
    <property type="method" value="X-ray"/>
    <property type="resolution" value="2.60 A"/>
    <property type="chains" value="A=38-451"/>
</dbReference>
<dbReference type="PDB" id="3TEG">
    <property type="method" value="X-ray"/>
    <property type="resolution" value="2.20 A"/>
    <property type="chains" value="A=38-451"/>
</dbReference>
<dbReference type="PDB" id="3TUP">
    <property type="method" value="X-ray"/>
    <property type="resolution" value="3.05 A"/>
    <property type="chains" value="A=38-451"/>
</dbReference>
<dbReference type="PDB" id="5MGH">
    <property type="method" value="X-ray"/>
    <property type="resolution" value="1.87 A"/>
    <property type="chains" value="A=47-451"/>
</dbReference>
<dbReference type="PDB" id="5MGU">
    <property type="method" value="X-ray"/>
    <property type="resolution" value="1.89 A"/>
    <property type="chains" value="A=46-451"/>
</dbReference>
<dbReference type="PDB" id="5MGV">
    <property type="method" value="X-ray"/>
    <property type="resolution" value="2.05 A"/>
    <property type="chains" value="A=47-451"/>
</dbReference>
<dbReference type="PDB" id="5MGW">
    <property type="method" value="X-ray"/>
    <property type="resolution" value="1.46 A"/>
    <property type="chains" value="A=46-451"/>
</dbReference>
<dbReference type="PDB" id="8P8X">
    <property type="method" value="X-ray"/>
    <property type="resolution" value="1.46 A"/>
    <property type="chains" value="A=39-451"/>
</dbReference>
<dbReference type="PDBsum" id="3CMQ"/>
<dbReference type="PDBsum" id="3HFV"/>
<dbReference type="PDBsum" id="3TEG"/>
<dbReference type="PDBsum" id="3TUP"/>
<dbReference type="PDBsum" id="5MGH"/>
<dbReference type="PDBsum" id="5MGU"/>
<dbReference type="PDBsum" id="5MGV"/>
<dbReference type="PDBsum" id="5MGW"/>
<dbReference type="PDBsum" id="8P8X"/>
<dbReference type="SMR" id="O95363"/>
<dbReference type="BioGRID" id="115909">
    <property type="interactions" value="144"/>
</dbReference>
<dbReference type="FunCoup" id="O95363">
    <property type="interactions" value="2303"/>
</dbReference>
<dbReference type="IntAct" id="O95363">
    <property type="interactions" value="123"/>
</dbReference>
<dbReference type="MINT" id="O95363"/>
<dbReference type="STRING" id="9606.ENSP00000316335"/>
<dbReference type="BindingDB" id="O95363"/>
<dbReference type="ChEMBL" id="CHEMBL2511"/>
<dbReference type="DrugBank" id="DB00120">
    <property type="generic name" value="Phenylalanine"/>
</dbReference>
<dbReference type="iPTMnet" id="O95363"/>
<dbReference type="PhosphoSitePlus" id="O95363"/>
<dbReference type="SwissPalm" id="O95363"/>
<dbReference type="BioMuta" id="FARS2"/>
<dbReference type="jPOST" id="O95363"/>
<dbReference type="MassIVE" id="O95363"/>
<dbReference type="PaxDb" id="9606-ENSP00000316335"/>
<dbReference type="PeptideAtlas" id="O95363"/>
<dbReference type="ProteomicsDB" id="50824"/>
<dbReference type="Pumba" id="O95363"/>
<dbReference type="Antibodypedia" id="2800">
    <property type="antibodies" value="132 antibodies from 24 providers"/>
</dbReference>
<dbReference type="DNASU" id="10667"/>
<dbReference type="Ensembl" id="ENST00000274680.9">
    <property type="protein sequence ID" value="ENSP00000274680.4"/>
    <property type="gene ID" value="ENSG00000145982.13"/>
</dbReference>
<dbReference type="Ensembl" id="ENST00000324331.10">
    <property type="protein sequence ID" value="ENSP00000316335.5"/>
    <property type="gene ID" value="ENSG00000145982.13"/>
</dbReference>
<dbReference type="GeneID" id="10667"/>
<dbReference type="KEGG" id="hsa:10667"/>
<dbReference type="MANE-Select" id="ENST00000274680.9">
    <property type="protein sequence ID" value="ENSP00000274680.4"/>
    <property type="RefSeq nucleotide sequence ID" value="NM_006567.5"/>
    <property type="RefSeq protein sequence ID" value="NP_006558.1"/>
</dbReference>
<dbReference type="UCSC" id="uc003mwr.3">
    <property type="organism name" value="human"/>
</dbReference>
<dbReference type="AGR" id="HGNC:21062"/>
<dbReference type="CTD" id="10667"/>
<dbReference type="DisGeNET" id="10667"/>
<dbReference type="GeneCards" id="FARS2"/>
<dbReference type="GeneReviews" id="FARS2"/>
<dbReference type="HGNC" id="HGNC:21062">
    <property type="gene designation" value="FARS2"/>
</dbReference>
<dbReference type="HPA" id="ENSG00000145982">
    <property type="expression patterns" value="Low tissue specificity"/>
</dbReference>
<dbReference type="MalaCards" id="FARS2"/>
<dbReference type="MIM" id="611592">
    <property type="type" value="gene"/>
</dbReference>
<dbReference type="MIM" id="614946">
    <property type="type" value="phenotype"/>
</dbReference>
<dbReference type="MIM" id="617046">
    <property type="type" value="phenotype"/>
</dbReference>
<dbReference type="neXtProt" id="NX_O95363"/>
<dbReference type="OpenTargets" id="ENSG00000145982"/>
<dbReference type="Orphanet" id="466722">
    <property type="disease" value="Autosomal recessive spastic paraplegia type 77"/>
</dbReference>
<dbReference type="Orphanet" id="319519">
    <property type="disease" value="Combined oxidative phosphorylation defect type 14"/>
</dbReference>
<dbReference type="PharmGKB" id="PA134954893"/>
<dbReference type="VEuPathDB" id="HostDB:ENSG00000145982"/>
<dbReference type="eggNOG" id="KOG2783">
    <property type="taxonomic scope" value="Eukaryota"/>
</dbReference>
<dbReference type="GeneTree" id="ENSGT00940000158071"/>
<dbReference type="HOGENOM" id="CLU_022696_1_0_1"/>
<dbReference type="InParanoid" id="O95363"/>
<dbReference type="OMA" id="PISHYPQ"/>
<dbReference type="OrthoDB" id="4457at2759"/>
<dbReference type="PAN-GO" id="O95363">
    <property type="GO annotations" value="4 GO annotations based on evolutionary models"/>
</dbReference>
<dbReference type="PhylomeDB" id="O95363"/>
<dbReference type="TreeFam" id="TF105798"/>
<dbReference type="BRENDA" id="6.1.1.20">
    <property type="organism ID" value="2681"/>
</dbReference>
<dbReference type="PathwayCommons" id="O95363"/>
<dbReference type="Reactome" id="R-HSA-379726">
    <property type="pathway name" value="Mitochondrial tRNA aminoacylation"/>
</dbReference>
<dbReference type="SignaLink" id="O95363"/>
<dbReference type="SIGNOR" id="O95363"/>
<dbReference type="BioGRID-ORCS" id="10667">
    <property type="hits" value="410 hits in 1171 CRISPR screens"/>
</dbReference>
<dbReference type="ChiTaRS" id="FARS2">
    <property type="organism name" value="human"/>
</dbReference>
<dbReference type="EvolutionaryTrace" id="O95363"/>
<dbReference type="GeneWiki" id="FARS2"/>
<dbReference type="GenomeRNAi" id="10667"/>
<dbReference type="Pharos" id="O95363">
    <property type="development level" value="Tchem"/>
</dbReference>
<dbReference type="PRO" id="PR:O95363"/>
<dbReference type="Proteomes" id="UP000005640">
    <property type="component" value="Chromosome 6"/>
</dbReference>
<dbReference type="RNAct" id="O95363">
    <property type="molecule type" value="protein"/>
</dbReference>
<dbReference type="Bgee" id="ENSG00000145982">
    <property type="expression patterns" value="Expressed in triceps brachii and 189 other cell types or tissues"/>
</dbReference>
<dbReference type="ExpressionAtlas" id="O95363">
    <property type="expression patterns" value="baseline and differential"/>
</dbReference>
<dbReference type="GO" id="GO:0005737">
    <property type="term" value="C:cytoplasm"/>
    <property type="evidence" value="ECO:0000318"/>
    <property type="project" value="GO_Central"/>
</dbReference>
<dbReference type="GO" id="GO:0005759">
    <property type="term" value="C:mitochondrial matrix"/>
    <property type="evidence" value="ECO:0000304"/>
    <property type="project" value="Reactome"/>
</dbReference>
<dbReference type="GO" id="GO:0005739">
    <property type="term" value="C:mitochondrion"/>
    <property type="evidence" value="ECO:0006056"/>
    <property type="project" value="FlyBase"/>
</dbReference>
<dbReference type="GO" id="GO:0005524">
    <property type="term" value="F:ATP binding"/>
    <property type="evidence" value="ECO:0007669"/>
    <property type="project" value="UniProtKB-KW"/>
</dbReference>
<dbReference type="GO" id="GO:0004826">
    <property type="term" value="F:phenylalanine-tRNA ligase activity"/>
    <property type="evidence" value="ECO:0000314"/>
    <property type="project" value="UniProtKB"/>
</dbReference>
<dbReference type="GO" id="GO:0000049">
    <property type="term" value="F:tRNA binding"/>
    <property type="evidence" value="ECO:0000314"/>
    <property type="project" value="UniProtKB"/>
</dbReference>
<dbReference type="GO" id="GO:0006432">
    <property type="term" value="P:phenylalanyl-tRNA aminoacylation"/>
    <property type="evidence" value="ECO:0000314"/>
    <property type="project" value="UniProtKB"/>
</dbReference>
<dbReference type="GO" id="GO:0006418">
    <property type="term" value="P:tRNA aminoacylation for protein translation"/>
    <property type="evidence" value="ECO:0000304"/>
    <property type="project" value="Reactome"/>
</dbReference>
<dbReference type="GO" id="GO:0008033">
    <property type="term" value="P:tRNA processing"/>
    <property type="evidence" value="ECO:0000314"/>
    <property type="project" value="UniProtKB"/>
</dbReference>
<dbReference type="CDD" id="cd00496">
    <property type="entry name" value="PheRS_alpha_core"/>
    <property type="match status" value="1"/>
</dbReference>
<dbReference type="FunFam" id="3.30.70.380:FF:000002">
    <property type="entry name" value="phenylalanine--tRNA ligase, mitochondrial"/>
    <property type="match status" value="1"/>
</dbReference>
<dbReference type="FunFam" id="3.30.930.10:FF:000041">
    <property type="entry name" value="Phenylalanyl-tRNA synthetase 2, mitochondrial"/>
    <property type="match status" value="1"/>
</dbReference>
<dbReference type="Gene3D" id="3.30.930.10">
    <property type="entry name" value="Bira Bifunctional Protein, Domain 2"/>
    <property type="match status" value="1"/>
</dbReference>
<dbReference type="Gene3D" id="3.30.70.380">
    <property type="entry name" value="Ferrodoxin-fold anticodon-binding domain"/>
    <property type="match status" value="1"/>
</dbReference>
<dbReference type="InterPro" id="IPR006195">
    <property type="entry name" value="aa-tRNA-synth_II"/>
</dbReference>
<dbReference type="InterPro" id="IPR045864">
    <property type="entry name" value="aa-tRNA-synth_II/BPL/LPL"/>
</dbReference>
<dbReference type="InterPro" id="IPR005121">
    <property type="entry name" value="Fdx_antiC-bd"/>
</dbReference>
<dbReference type="InterPro" id="IPR036690">
    <property type="entry name" value="Fdx_antiC-bd_sf"/>
</dbReference>
<dbReference type="InterPro" id="IPR004530">
    <property type="entry name" value="Phe-tRNA-synth_IIc_mito"/>
</dbReference>
<dbReference type="InterPro" id="IPR002319">
    <property type="entry name" value="Phenylalanyl-tRNA_Synthase"/>
</dbReference>
<dbReference type="NCBIfam" id="TIGR00469">
    <property type="entry name" value="pheS_mito"/>
    <property type="match status" value="1"/>
</dbReference>
<dbReference type="PANTHER" id="PTHR11538:SF41">
    <property type="entry name" value="PHENYLALANINE--TRNA LIGASE, MITOCHONDRIAL"/>
    <property type="match status" value="1"/>
</dbReference>
<dbReference type="PANTHER" id="PTHR11538">
    <property type="entry name" value="PHENYLALANYL-TRNA SYNTHETASE"/>
    <property type="match status" value="1"/>
</dbReference>
<dbReference type="Pfam" id="PF03147">
    <property type="entry name" value="FDX-ACB"/>
    <property type="match status" value="1"/>
</dbReference>
<dbReference type="Pfam" id="PF01409">
    <property type="entry name" value="tRNA-synt_2d"/>
    <property type="match status" value="2"/>
</dbReference>
<dbReference type="SMART" id="SM00896">
    <property type="entry name" value="FDX-ACB"/>
    <property type="match status" value="1"/>
</dbReference>
<dbReference type="SUPFAM" id="SSF54991">
    <property type="entry name" value="Anticodon-binding domain of PheRS"/>
    <property type="match status" value="1"/>
</dbReference>
<dbReference type="SUPFAM" id="SSF55681">
    <property type="entry name" value="Class II aaRS and biotin synthetases"/>
    <property type="match status" value="1"/>
</dbReference>
<dbReference type="PROSITE" id="PS50862">
    <property type="entry name" value="AA_TRNA_LIGASE_II"/>
    <property type="match status" value="1"/>
</dbReference>
<dbReference type="PROSITE" id="PS51447">
    <property type="entry name" value="FDX_ACB"/>
    <property type="match status" value="1"/>
</dbReference>